<comment type="function">
    <text evidence="3">Specifically deubiquitinates 'Lys-120' of histone H2A (H2AK119Ub), a specific tag for epigenetic transcriptional repression, thereby acting as a coactivator. Deubiquitination of histone H2A is a prerequisite for subsequent phosphorylation at 'Ser-11' of histone H3 (H3S10ph), and is required for chromosome segregation when cells enter into mitosis. In resting B- and T-lymphocytes, phosphorylation by AURKB leads to enhance its activity, thereby maintaining transcription in resting lymphocytes. Regulates Hox gene expression via histone H2A deubiquitination. Prefers nucleosomal substrates. Does not deubiquitinate histone H2B. Also deubiquitinates non-histone proteins, such as ribosomal protein RPS27A: deubiquitination of monoubiquitinated RPS27A promotes maturation of the 40S ribosomal subunit. Also mediates deubiquitination of tektin proteins (TEKT1, TEKT2, TEK3, TEKT4 and TEKT5), promoting their stability.</text>
</comment>
<comment type="catalytic activity">
    <reaction evidence="3">
        <text>Thiol-dependent hydrolysis of ester, thioester, amide, peptide and isopeptide bonds formed by the C-terminal Gly of ubiquitin (a 76-residue protein attached to proteins as an intracellular targeting signal).</text>
        <dbReference type="EC" id="3.4.19.12"/>
    </reaction>
</comment>
<comment type="subunit">
    <text evidence="3">Homotetramer. Associates with late pre-40S ribosomes. Interacts with CEP78; promoting deubiquitination of tektins.</text>
</comment>
<comment type="subcellular location">
    <subcellularLocation>
        <location evidence="3">Nucleus</location>
    </subcellularLocation>
</comment>
<comment type="domain">
    <text evidence="3">The UBP-type zinc finger binds 3 zinc ions that form a pair of cross-braced ring fingers encapsulated within a third zinc finger in the primary structure. It recognizes the C-terminal tail of free ubiquitin.</text>
</comment>
<comment type="PTM">
    <text evidence="3">Phosphorylated at the onset of mitosis and dephosphorylated during the metaphase/anaphase transition. Phosphorylation by AURKB enhances the deubiquitinase activity.</text>
</comment>
<comment type="similarity">
    <text evidence="3">Belongs to the peptidase C19 family. USP16 subfamily.</text>
</comment>
<evidence type="ECO:0000250" key="1">
    <source>
        <dbReference type="UniProtKB" id="Q99LG0"/>
    </source>
</evidence>
<evidence type="ECO:0000250" key="2">
    <source>
        <dbReference type="UniProtKB" id="Q9Y5T5"/>
    </source>
</evidence>
<evidence type="ECO:0000255" key="3">
    <source>
        <dbReference type="HAMAP-Rule" id="MF_03062"/>
    </source>
</evidence>
<evidence type="ECO:0000255" key="4">
    <source>
        <dbReference type="PROSITE-ProRule" id="PRU00502"/>
    </source>
</evidence>
<evidence type="ECO:0000256" key="5">
    <source>
        <dbReference type="SAM" id="MobiDB-lite"/>
    </source>
</evidence>
<evidence type="ECO:0000305" key="6"/>
<proteinExistence type="evidence at transcript level"/>
<protein>
    <recommendedName>
        <fullName evidence="3">Ubiquitin carboxyl-terminal hydrolase 16</fullName>
        <ecNumber evidence="3">3.4.19.12</ecNumber>
    </recommendedName>
    <alternativeName>
        <fullName evidence="3">Deubiquitinating enzyme 16</fullName>
    </alternativeName>
    <alternativeName>
        <fullName evidence="3">Ubiquitin thioesterase 16</fullName>
    </alternativeName>
    <alternativeName>
        <fullName evidence="3">Ubiquitin-specific-processing protease 16</fullName>
    </alternativeName>
</protein>
<feature type="chain" id="PRO_0000367501" description="Ubiquitin carboxyl-terminal hydrolase 16">
    <location>
        <begin position="1"/>
        <end position="826"/>
    </location>
</feature>
<feature type="domain" description="USP">
    <location>
        <begin position="195"/>
        <end position="825"/>
    </location>
</feature>
<feature type="zinc finger region" description="UBP-type" evidence="4">
    <location>
        <begin position="22"/>
        <end position="142"/>
    </location>
</feature>
<feature type="region of interest" description="Disordered" evidence="5">
    <location>
        <begin position="144"/>
        <end position="189"/>
    </location>
</feature>
<feature type="region of interest" description="Disordered" evidence="5">
    <location>
        <begin position="393"/>
        <end position="458"/>
    </location>
</feature>
<feature type="compositionally biased region" description="Basic and acidic residues" evidence="5">
    <location>
        <begin position="158"/>
        <end position="180"/>
    </location>
</feature>
<feature type="compositionally biased region" description="Basic and acidic residues" evidence="5">
    <location>
        <begin position="393"/>
        <end position="407"/>
    </location>
</feature>
<feature type="compositionally biased region" description="Acidic residues" evidence="5">
    <location>
        <begin position="408"/>
        <end position="419"/>
    </location>
</feature>
<feature type="compositionally biased region" description="Basic and acidic residues" evidence="5">
    <location>
        <begin position="420"/>
        <end position="429"/>
    </location>
</feature>
<feature type="compositionally biased region" description="Basic residues" evidence="5">
    <location>
        <begin position="437"/>
        <end position="457"/>
    </location>
</feature>
<feature type="active site" description="Nucleophile" evidence="3">
    <location>
        <position position="204"/>
    </location>
</feature>
<feature type="active site" description="Proton acceptor" evidence="3">
    <location>
        <position position="760"/>
    </location>
</feature>
<feature type="binding site" evidence="4">
    <location>
        <position position="24"/>
    </location>
    <ligand>
        <name>Zn(2+)</name>
        <dbReference type="ChEBI" id="CHEBI:29105"/>
        <label>1</label>
    </ligand>
</feature>
<feature type="binding site" evidence="4">
    <location>
        <position position="26"/>
    </location>
    <ligand>
        <name>Zn(2+)</name>
        <dbReference type="ChEBI" id="CHEBI:29105"/>
        <label>1</label>
    </ligand>
</feature>
<feature type="binding site" evidence="4">
    <location>
        <position position="48"/>
    </location>
    <ligand>
        <name>Zn(2+)</name>
        <dbReference type="ChEBI" id="CHEBI:29105"/>
        <label>2</label>
    </ligand>
</feature>
<feature type="binding site" evidence="4">
    <location>
        <position position="51"/>
    </location>
    <ligand>
        <name>Zn(2+)</name>
        <dbReference type="ChEBI" id="CHEBI:29105"/>
        <label>2</label>
    </ligand>
</feature>
<feature type="binding site" evidence="4">
    <location>
        <position position="74"/>
    </location>
    <ligand>
        <name>Zn(2+)</name>
        <dbReference type="ChEBI" id="CHEBI:29105"/>
        <label>3</label>
    </ligand>
</feature>
<feature type="binding site" evidence="4">
    <location>
        <position position="77"/>
    </location>
    <ligand>
        <name>Zn(2+)</name>
        <dbReference type="ChEBI" id="CHEBI:29105"/>
        <label>3</label>
    </ligand>
</feature>
<feature type="binding site" evidence="4">
    <location>
        <position position="82"/>
    </location>
    <ligand>
        <name>Zn(2+)</name>
        <dbReference type="ChEBI" id="CHEBI:29105"/>
        <label>2</label>
    </ligand>
</feature>
<feature type="binding site" evidence="4">
    <location>
        <position position="90"/>
    </location>
    <ligand>
        <name>Zn(2+)</name>
        <dbReference type="ChEBI" id="CHEBI:29105"/>
        <label>2</label>
    </ligand>
</feature>
<feature type="binding site" evidence="4">
    <location>
        <position position="94"/>
    </location>
    <ligand>
        <name>Zn(2+)</name>
        <dbReference type="ChEBI" id="CHEBI:29105"/>
        <label>3</label>
    </ligand>
</feature>
<feature type="binding site" evidence="4">
    <location>
        <position position="103"/>
    </location>
    <ligand>
        <name>Zn(2+)</name>
        <dbReference type="ChEBI" id="CHEBI:29105"/>
        <label>3</label>
    </ligand>
</feature>
<feature type="binding site" evidence="4">
    <location>
        <position position="116"/>
    </location>
    <ligand>
        <name>Zn(2+)</name>
        <dbReference type="ChEBI" id="CHEBI:29105"/>
        <label>1</label>
    </ligand>
</feature>
<feature type="binding site" evidence="4">
    <location>
        <position position="119"/>
    </location>
    <ligand>
        <name>Zn(2+)</name>
        <dbReference type="ChEBI" id="CHEBI:29105"/>
        <label>1</label>
    </ligand>
</feature>
<feature type="modified residue" description="Phosphoserine" evidence="2">
    <location>
        <position position="188"/>
    </location>
</feature>
<feature type="modified residue" description="Phosphoserine" evidence="2">
    <location>
        <position position="414"/>
    </location>
</feature>
<feature type="modified residue" description="Phosphoserine" evidence="1">
    <location>
        <position position="530"/>
    </location>
</feature>
<feature type="modified residue" description="Phosphoserine" evidence="2">
    <location>
        <position position="551"/>
    </location>
</feature>
<feature type="cross-link" description="Glycyl lysine isopeptide (Lys-Gly) (interchain with G-Cter in SUMO2)" evidence="2">
    <location>
        <position position="140"/>
    </location>
</feature>
<feature type="sequence conflict" description="In Ref. 2; AAI23862." evidence="6" ref="2">
    <original>S</original>
    <variation>N</variation>
    <location>
        <position position="771"/>
    </location>
</feature>
<reference key="1">
    <citation type="journal article" date="2009" name="Genome Biol.">
        <title>A whole-genome assembly of the domestic cow, Bos taurus.</title>
        <authorList>
            <person name="Zimin A.V."/>
            <person name="Delcher A.L."/>
            <person name="Florea L."/>
            <person name="Kelley D.R."/>
            <person name="Schatz M.C."/>
            <person name="Puiu D."/>
            <person name="Hanrahan F."/>
            <person name="Pertea G."/>
            <person name="Van Tassell C.P."/>
            <person name="Sonstegard T.S."/>
            <person name="Marcais G."/>
            <person name="Roberts M."/>
            <person name="Subramanian P."/>
            <person name="Yorke J.A."/>
            <person name="Salzberg S.L."/>
        </authorList>
    </citation>
    <scope>NUCLEOTIDE SEQUENCE [LARGE SCALE GENOMIC DNA]</scope>
    <source>
        <strain>Hereford</strain>
    </source>
</reference>
<reference key="2">
    <citation type="submission" date="2006-09" db="EMBL/GenBank/DDBJ databases">
        <authorList>
            <consortium name="NIH - Mammalian Gene Collection (MGC) project"/>
        </authorList>
    </citation>
    <scope>NUCLEOTIDE SEQUENCE [LARGE SCALE MRNA]</scope>
    <source>
        <strain>Hereford</strain>
        <tissue>Fetal muscle</tissue>
    </source>
</reference>
<accession>Q08DA3</accession>
<accession>F1N2B1</accession>
<sequence length="826" mass="94050">MGKKRTKGKTVPIDDSSESLEPVCRHIRKGLEQGNLKKALVNVEWNICQDCKTDNKVKDKSEEETEENPSVWLCLKCGHQGCGRNSQEQHALKHYMKPRSEPHCLVLSLDNWSVWCYLCDDEVHYCNSNRLGQVVDYVRKQAGNTTPESAEDNGNIELENKKLEKESKNEQEREKKENMARENPSMNSTSQITVKGLSNLGNTCFFNAVMQNLSQTPVLRELLKEVKMSGTIVKIEPPDLALTEPLEINLEPPGPLTLAMSQFLNEMQETKKGIVTPRELFSQVCKKAVRFKGYQQQDSQELLRYLLDGMRAEEHQRVSKGILKAFDNSTEKVDEELKNKVKEYEKKKSVPSFVDRIFGGELTSTIMCDECRTVSLVHESFLDLSLPVLDDQSGKKSINDKNLKKTMEDEDKDSEEEKDNDSYLKERNDIPSGTSKHLQKKAKKQAKKQAKNQRRQQKIQGKVLHLNDVYAIDHPEDNECEVEMSLQREADIKSNHISQEEVAPKEYCVNQKDLNGHEKMIESITDNQKSTEEAAMKNVSVDNDLEVLASSATECPRNLNGAYLKEGSNGEVDISSGFENLNLNAALQPDEINIEILDDDPTPGTKVYEVVNEDPETAFCTLANREAFNTDECSVQHCLYQFTRNEKLRDANKLLCEVCTRRQYSGPKANMKGERKHIYTNAKKQMLISLAPPVLTLHFKRFQQAGFNLRKVNKHIKFPEILDLAPFCTLKCKNVAEEHTRVLYSLYGVVEHSGTMRSGHYTAYAKTRTASTHLSNLVLHGDIPQDFEMESTKGQWFHISDTHVQAVPTTKVLSSQAYLLFYERIL</sequence>
<gene>
    <name evidence="3" type="primary">USP16</name>
</gene>
<name>UBP16_BOVIN</name>
<organism>
    <name type="scientific">Bos taurus</name>
    <name type="common">Bovine</name>
    <dbReference type="NCBI Taxonomy" id="9913"/>
    <lineage>
        <taxon>Eukaryota</taxon>
        <taxon>Metazoa</taxon>
        <taxon>Chordata</taxon>
        <taxon>Craniata</taxon>
        <taxon>Vertebrata</taxon>
        <taxon>Euteleostomi</taxon>
        <taxon>Mammalia</taxon>
        <taxon>Eutheria</taxon>
        <taxon>Laurasiatheria</taxon>
        <taxon>Artiodactyla</taxon>
        <taxon>Ruminantia</taxon>
        <taxon>Pecora</taxon>
        <taxon>Bovidae</taxon>
        <taxon>Bovinae</taxon>
        <taxon>Bos</taxon>
    </lineage>
</organism>
<keyword id="KW-0010">Activator</keyword>
<keyword id="KW-0131">Cell cycle</keyword>
<keyword id="KW-0132">Cell division</keyword>
<keyword id="KW-0156">Chromatin regulator</keyword>
<keyword id="KW-0378">Hydrolase</keyword>
<keyword id="KW-1017">Isopeptide bond</keyword>
<keyword id="KW-0479">Metal-binding</keyword>
<keyword id="KW-0498">Mitosis</keyword>
<keyword id="KW-0539">Nucleus</keyword>
<keyword id="KW-0597">Phosphoprotein</keyword>
<keyword id="KW-0645">Protease</keyword>
<keyword id="KW-1185">Reference proteome</keyword>
<keyword id="KW-0788">Thiol protease</keyword>
<keyword id="KW-0804">Transcription</keyword>
<keyword id="KW-0805">Transcription regulation</keyword>
<keyword id="KW-0832">Ubl conjugation</keyword>
<keyword id="KW-0833">Ubl conjugation pathway</keyword>
<keyword id="KW-0862">Zinc</keyword>
<keyword id="KW-0863">Zinc-finger</keyword>
<dbReference type="EC" id="3.4.19.12" evidence="3"/>
<dbReference type="EMBL" id="DAAA02000172">
    <property type="status" value="NOT_ANNOTATED_CDS"/>
    <property type="molecule type" value="Genomic_DNA"/>
</dbReference>
<dbReference type="EMBL" id="DAAA02000173">
    <property type="status" value="NOT_ANNOTATED_CDS"/>
    <property type="molecule type" value="Genomic_DNA"/>
</dbReference>
<dbReference type="EMBL" id="BC123861">
    <property type="protein sequence ID" value="AAI23862.1"/>
    <property type="molecule type" value="mRNA"/>
</dbReference>
<dbReference type="RefSeq" id="NP_001070335.1">
    <property type="nucleotide sequence ID" value="NM_001076867.1"/>
</dbReference>
<dbReference type="SMR" id="Q08DA3"/>
<dbReference type="FunCoup" id="Q08DA3">
    <property type="interactions" value="4690"/>
</dbReference>
<dbReference type="STRING" id="9913.ENSBTAP00000026801"/>
<dbReference type="PaxDb" id="9913-ENSBTAP00000026801"/>
<dbReference type="GeneID" id="519992"/>
<dbReference type="KEGG" id="bta:519992"/>
<dbReference type="CTD" id="10600"/>
<dbReference type="eggNOG" id="KOG1873">
    <property type="taxonomic scope" value="Eukaryota"/>
</dbReference>
<dbReference type="HOGENOM" id="CLU_007938_1_0_1"/>
<dbReference type="InParanoid" id="Q08DA3"/>
<dbReference type="OrthoDB" id="2020758at2759"/>
<dbReference type="TreeFam" id="TF326075"/>
<dbReference type="Proteomes" id="UP000009136">
    <property type="component" value="Unplaced"/>
</dbReference>
<dbReference type="GO" id="GO:0005737">
    <property type="term" value="C:cytoplasm"/>
    <property type="evidence" value="ECO:0000250"/>
    <property type="project" value="UniProtKB"/>
</dbReference>
<dbReference type="GO" id="GO:0005634">
    <property type="term" value="C:nucleus"/>
    <property type="evidence" value="ECO:0000250"/>
    <property type="project" value="UniProtKB"/>
</dbReference>
<dbReference type="GO" id="GO:0004843">
    <property type="term" value="F:cysteine-type deubiquitinase activity"/>
    <property type="evidence" value="ECO:0000250"/>
    <property type="project" value="UniProtKB"/>
</dbReference>
<dbReference type="GO" id="GO:0004197">
    <property type="term" value="F:cysteine-type endopeptidase activity"/>
    <property type="evidence" value="ECO:0000250"/>
    <property type="project" value="UniProtKB"/>
</dbReference>
<dbReference type="GO" id="GO:0042393">
    <property type="term" value="F:histone binding"/>
    <property type="evidence" value="ECO:0000250"/>
    <property type="project" value="UniProtKB"/>
</dbReference>
<dbReference type="GO" id="GO:0140950">
    <property type="term" value="F:histone H2A deubiquitinase activity"/>
    <property type="evidence" value="ECO:0000250"/>
    <property type="project" value="UniProtKB"/>
</dbReference>
<dbReference type="GO" id="GO:0043024">
    <property type="term" value="F:ribosomal small subunit binding"/>
    <property type="evidence" value="ECO:0000250"/>
    <property type="project" value="UniProtKB"/>
</dbReference>
<dbReference type="GO" id="GO:0003713">
    <property type="term" value="F:transcription coactivator activity"/>
    <property type="evidence" value="ECO:0000250"/>
    <property type="project" value="UniProtKB"/>
</dbReference>
<dbReference type="GO" id="GO:0043130">
    <property type="term" value="F:ubiquitin binding"/>
    <property type="evidence" value="ECO:0000250"/>
    <property type="project" value="UniProtKB"/>
</dbReference>
<dbReference type="GO" id="GO:0008270">
    <property type="term" value="F:zinc ion binding"/>
    <property type="evidence" value="ECO:0000250"/>
    <property type="project" value="UniProtKB"/>
</dbReference>
<dbReference type="GO" id="GO:0051301">
    <property type="term" value="P:cell division"/>
    <property type="evidence" value="ECO:0007669"/>
    <property type="project" value="UniProtKB-KW"/>
</dbReference>
<dbReference type="GO" id="GO:0140014">
    <property type="term" value="P:mitotic nuclear division"/>
    <property type="evidence" value="ECO:0007669"/>
    <property type="project" value="UniProtKB-UniRule"/>
</dbReference>
<dbReference type="GO" id="GO:0035520">
    <property type="term" value="P:monoubiquitinated protein deubiquitination"/>
    <property type="evidence" value="ECO:0000250"/>
    <property type="project" value="UniProtKB"/>
</dbReference>
<dbReference type="GO" id="GO:0045893">
    <property type="term" value="P:positive regulation of DNA-templated transcription"/>
    <property type="evidence" value="ECO:0000250"/>
    <property type="project" value="UniProtKB"/>
</dbReference>
<dbReference type="GO" id="GO:0090070">
    <property type="term" value="P:positive regulation of ribosome biogenesis"/>
    <property type="evidence" value="ECO:0000250"/>
    <property type="project" value="UniProtKB"/>
</dbReference>
<dbReference type="GO" id="GO:0045944">
    <property type="term" value="P:positive regulation of transcription by RNA polymerase II"/>
    <property type="evidence" value="ECO:0000250"/>
    <property type="project" value="UniProtKB"/>
</dbReference>
<dbReference type="GO" id="GO:0051289">
    <property type="term" value="P:protein homotetramerization"/>
    <property type="evidence" value="ECO:0000250"/>
    <property type="project" value="UniProtKB"/>
</dbReference>
<dbReference type="GO" id="GO:0006508">
    <property type="term" value="P:proteolysis"/>
    <property type="evidence" value="ECO:0007669"/>
    <property type="project" value="UniProtKB-KW"/>
</dbReference>
<dbReference type="GO" id="GO:0051726">
    <property type="term" value="P:regulation of cell cycle"/>
    <property type="evidence" value="ECO:0007669"/>
    <property type="project" value="InterPro"/>
</dbReference>
<dbReference type="GO" id="GO:0006357">
    <property type="term" value="P:regulation of transcription by RNA polymerase II"/>
    <property type="evidence" value="ECO:0000250"/>
    <property type="project" value="UniProtKB"/>
</dbReference>
<dbReference type="CDD" id="cd02667">
    <property type="entry name" value="Peptidase_C19K"/>
    <property type="match status" value="1"/>
</dbReference>
<dbReference type="FunFam" id="3.30.40.10:FF:000147">
    <property type="entry name" value="Ubiquitin carboxyl-terminal hydrolase 16"/>
    <property type="match status" value="1"/>
</dbReference>
<dbReference type="FunFam" id="3.90.70.10:FF:000045">
    <property type="entry name" value="Ubiquitin carboxyl-terminal hydrolase 16"/>
    <property type="match status" value="1"/>
</dbReference>
<dbReference type="FunFam" id="3.90.70.10:FF:000082">
    <property type="entry name" value="Ubiquitin carboxyl-terminal hydrolase 16"/>
    <property type="match status" value="1"/>
</dbReference>
<dbReference type="Gene3D" id="3.90.70.10">
    <property type="entry name" value="Cysteine proteinases"/>
    <property type="match status" value="2"/>
</dbReference>
<dbReference type="Gene3D" id="3.30.40.10">
    <property type="entry name" value="Zinc/RING finger domain, C3HC4 (zinc finger)"/>
    <property type="match status" value="1"/>
</dbReference>
<dbReference type="HAMAP" id="MF_03062">
    <property type="entry name" value="UBP16"/>
    <property type="match status" value="1"/>
</dbReference>
<dbReference type="InterPro" id="IPR038765">
    <property type="entry name" value="Papain-like_cys_pep_sf"/>
</dbReference>
<dbReference type="InterPro" id="IPR050164">
    <property type="entry name" value="Peptidase_C19"/>
</dbReference>
<dbReference type="InterPro" id="IPR001394">
    <property type="entry name" value="Peptidase_C19_UCH"/>
</dbReference>
<dbReference type="InterPro" id="IPR030849">
    <property type="entry name" value="UBP16"/>
</dbReference>
<dbReference type="InterPro" id="IPR018200">
    <property type="entry name" value="USP_CS"/>
</dbReference>
<dbReference type="InterPro" id="IPR028889">
    <property type="entry name" value="USP_dom"/>
</dbReference>
<dbReference type="InterPro" id="IPR013083">
    <property type="entry name" value="Znf_RING/FYVE/PHD"/>
</dbReference>
<dbReference type="InterPro" id="IPR001607">
    <property type="entry name" value="Znf_UBP"/>
</dbReference>
<dbReference type="PANTHER" id="PTHR24006">
    <property type="entry name" value="UBIQUITIN CARBOXYL-TERMINAL HYDROLASE"/>
    <property type="match status" value="1"/>
</dbReference>
<dbReference type="PANTHER" id="PTHR24006:SF852">
    <property type="entry name" value="UBIQUITIN CARBOXYL-TERMINAL HYDROLASE"/>
    <property type="match status" value="1"/>
</dbReference>
<dbReference type="Pfam" id="PF00443">
    <property type="entry name" value="UCH"/>
    <property type="match status" value="1"/>
</dbReference>
<dbReference type="Pfam" id="PF02148">
    <property type="entry name" value="zf-UBP"/>
    <property type="match status" value="1"/>
</dbReference>
<dbReference type="SMART" id="SM00290">
    <property type="entry name" value="ZnF_UBP"/>
    <property type="match status" value="1"/>
</dbReference>
<dbReference type="SUPFAM" id="SSF54001">
    <property type="entry name" value="Cysteine proteinases"/>
    <property type="match status" value="1"/>
</dbReference>
<dbReference type="SUPFAM" id="SSF57850">
    <property type="entry name" value="RING/U-box"/>
    <property type="match status" value="1"/>
</dbReference>
<dbReference type="PROSITE" id="PS00972">
    <property type="entry name" value="USP_1"/>
    <property type="match status" value="1"/>
</dbReference>
<dbReference type="PROSITE" id="PS00973">
    <property type="entry name" value="USP_2"/>
    <property type="match status" value="1"/>
</dbReference>
<dbReference type="PROSITE" id="PS50235">
    <property type="entry name" value="USP_3"/>
    <property type="match status" value="1"/>
</dbReference>
<dbReference type="PROSITE" id="PS50271">
    <property type="entry name" value="ZF_UBP"/>
    <property type="match status" value="1"/>
</dbReference>